<organism>
    <name type="scientific">Eremothecium gossypii (strain ATCC 10895 / CBS 109.51 / FGSC 9923 / NRRL Y-1056)</name>
    <name type="common">Yeast</name>
    <name type="synonym">Ashbya gossypii</name>
    <dbReference type="NCBI Taxonomy" id="284811"/>
    <lineage>
        <taxon>Eukaryota</taxon>
        <taxon>Fungi</taxon>
        <taxon>Dikarya</taxon>
        <taxon>Ascomycota</taxon>
        <taxon>Saccharomycotina</taxon>
        <taxon>Saccharomycetes</taxon>
        <taxon>Saccharomycetales</taxon>
        <taxon>Saccharomycetaceae</taxon>
        <taxon>Eremothecium</taxon>
    </lineage>
</organism>
<accession>Q75DD1</accession>
<reference key="1">
    <citation type="journal article" date="2004" name="Science">
        <title>The Ashbya gossypii genome as a tool for mapping the ancient Saccharomyces cerevisiae genome.</title>
        <authorList>
            <person name="Dietrich F.S."/>
            <person name="Voegeli S."/>
            <person name="Brachat S."/>
            <person name="Lerch A."/>
            <person name="Gates K."/>
            <person name="Steiner S."/>
            <person name="Mohr C."/>
            <person name="Poehlmann R."/>
            <person name="Luedi P."/>
            <person name="Choi S."/>
            <person name="Wing R.A."/>
            <person name="Flavier A."/>
            <person name="Gaffney T.D."/>
            <person name="Philippsen P."/>
        </authorList>
    </citation>
    <scope>NUCLEOTIDE SEQUENCE [LARGE SCALE GENOMIC DNA]</scope>
    <source>
        <strain>ATCC 10895 / CBS 109.51 / FGSC 9923 / NRRL Y-1056</strain>
    </source>
</reference>
<reference key="2">
    <citation type="journal article" date="2013" name="G3 (Bethesda)">
        <title>Genomes of Ashbya fungi isolated from insects reveal four mating-type loci, numerous translocations, lack of transposons, and distinct gene duplications.</title>
        <authorList>
            <person name="Dietrich F.S."/>
            <person name="Voegeli S."/>
            <person name="Kuo S."/>
            <person name="Philippsen P."/>
        </authorList>
    </citation>
    <scope>GENOME REANNOTATION</scope>
    <scope>SEQUENCE REVISION TO 22</scope>
    <source>
        <strain>ATCC 10895 / CBS 109.51 / FGSC 9923 / NRRL Y-1056</strain>
    </source>
</reference>
<protein>
    <recommendedName>
        <fullName>Nucleoside diphosphate kinase</fullName>
        <shortName>NDK</shortName>
        <shortName>NDP kinase</shortName>
        <ecNumber>2.7.4.6</ecNumber>
    </recommendedName>
</protein>
<gene>
    <name type="primary">NDK1</name>
    <name type="ordered locus">ABR096C</name>
</gene>
<dbReference type="EC" id="2.7.4.6"/>
<dbReference type="EMBL" id="AE016815">
    <property type="protein sequence ID" value="AAS50866.2"/>
    <property type="molecule type" value="Genomic_DNA"/>
</dbReference>
<dbReference type="RefSeq" id="NP_983042.2">
    <property type="nucleotide sequence ID" value="NM_208395.2"/>
</dbReference>
<dbReference type="SMR" id="Q75DD1"/>
<dbReference type="FunCoup" id="Q75DD1">
    <property type="interactions" value="906"/>
</dbReference>
<dbReference type="STRING" id="284811.Q75DD1"/>
<dbReference type="EnsemblFungi" id="AAS50866">
    <property type="protein sequence ID" value="AAS50866"/>
    <property type="gene ID" value="AGOS_ABR096C"/>
</dbReference>
<dbReference type="GeneID" id="4619146"/>
<dbReference type="KEGG" id="ago:AGOS_ABR096C"/>
<dbReference type="eggNOG" id="KOG0888">
    <property type="taxonomic scope" value="Eukaryota"/>
</dbReference>
<dbReference type="HOGENOM" id="CLU_060216_6_3_1"/>
<dbReference type="InParanoid" id="Q75DD1"/>
<dbReference type="OMA" id="QHYGEHK"/>
<dbReference type="OrthoDB" id="2162449at2759"/>
<dbReference type="Proteomes" id="UP000000591">
    <property type="component" value="Chromosome II"/>
</dbReference>
<dbReference type="GO" id="GO:0005829">
    <property type="term" value="C:cytosol"/>
    <property type="evidence" value="ECO:0007669"/>
    <property type="project" value="EnsemblFungi"/>
</dbReference>
<dbReference type="GO" id="GO:0005758">
    <property type="term" value="C:mitochondrial intermembrane space"/>
    <property type="evidence" value="ECO:0007669"/>
    <property type="project" value="EnsemblFungi"/>
</dbReference>
<dbReference type="GO" id="GO:0005524">
    <property type="term" value="F:ATP binding"/>
    <property type="evidence" value="ECO:0007669"/>
    <property type="project" value="UniProtKB-KW"/>
</dbReference>
<dbReference type="GO" id="GO:0046872">
    <property type="term" value="F:metal ion binding"/>
    <property type="evidence" value="ECO:0007669"/>
    <property type="project" value="UniProtKB-KW"/>
</dbReference>
<dbReference type="GO" id="GO:0004550">
    <property type="term" value="F:nucleoside diphosphate kinase activity"/>
    <property type="evidence" value="ECO:0007669"/>
    <property type="project" value="UniProtKB-EC"/>
</dbReference>
<dbReference type="GO" id="GO:0006241">
    <property type="term" value="P:CTP biosynthetic process"/>
    <property type="evidence" value="ECO:0007669"/>
    <property type="project" value="InterPro"/>
</dbReference>
<dbReference type="GO" id="GO:0006974">
    <property type="term" value="P:DNA damage response"/>
    <property type="evidence" value="ECO:0007669"/>
    <property type="project" value="EnsemblFungi"/>
</dbReference>
<dbReference type="GO" id="GO:0006183">
    <property type="term" value="P:GTP biosynthetic process"/>
    <property type="evidence" value="ECO:0007669"/>
    <property type="project" value="InterPro"/>
</dbReference>
<dbReference type="GO" id="GO:0006228">
    <property type="term" value="P:UTP biosynthetic process"/>
    <property type="evidence" value="ECO:0007669"/>
    <property type="project" value="InterPro"/>
</dbReference>
<dbReference type="CDD" id="cd04413">
    <property type="entry name" value="NDPk_I"/>
    <property type="match status" value="1"/>
</dbReference>
<dbReference type="FunFam" id="3.30.70.141:FF:000002">
    <property type="entry name" value="Nucleoside diphosphate kinase"/>
    <property type="match status" value="1"/>
</dbReference>
<dbReference type="Gene3D" id="3.30.70.141">
    <property type="entry name" value="Nucleoside diphosphate kinase-like domain"/>
    <property type="match status" value="1"/>
</dbReference>
<dbReference type="HAMAP" id="MF_00451">
    <property type="entry name" value="NDP_kinase"/>
    <property type="match status" value="1"/>
</dbReference>
<dbReference type="InterPro" id="IPR034907">
    <property type="entry name" value="NDK-like_dom"/>
</dbReference>
<dbReference type="InterPro" id="IPR036850">
    <property type="entry name" value="NDK-like_dom_sf"/>
</dbReference>
<dbReference type="InterPro" id="IPR001564">
    <property type="entry name" value="Nucleoside_diP_kinase"/>
</dbReference>
<dbReference type="InterPro" id="IPR023005">
    <property type="entry name" value="Nucleoside_diP_kinase_AS"/>
</dbReference>
<dbReference type="NCBIfam" id="NF001908">
    <property type="entry name" value="PRK00668.1"/>
    <property type="match status" value="1"/>
</dbReference>
<dbReference type="PANTHER" id="PTHR11349">
    <property type="entry name" value="NUCLEOSIDE DIPHOSPHATE KINASE"/>
    <property type="match status" value="1"/>
</dbReference>
<dbReference type="Pfam" id="PF00334">
    <property type="entry name" value="NDK"/>
    <property type="match status" value="1"/>
</dbReference>
<dbReference type="PRINTS" id="PR01243">
    <property type="entry name" value="NUCDPKINASE"/>
</dbReference>
<dbReference type="SMART" id="SM00562">
    <property type="entry name" value="NDK"/>
    <property type="match status" value="1"/>
</dbReference>
<dbReference type="SUPFAM" id="SSF54919">
    <property type="entry name" value="Nucleoside diphosphate kinase, NDK"/>
    <property type="match status" value="1"/>
</dbReference>
<dbReference type="PROSITE" id="PS00469">
    <property type="entry name" value="NDPK"/>
    <property type="match status" value="1"/>
</dbReference>
<dbReference type="PROSITE" id="PS51374">
    <property type="entry name" value="NDPK_LIKE"/>
    <property type="match status" value="1"/>
</dbReference>
<name>NDK_EREGS</name>
<evidence type="ECO:0000250" key="1"/>
<evidence type="ECO:0000305" key="2"/>
<comment type="function">
    <text evidence="1">Major role in the synthesis of nucleoside triphosphates other than ATP. The ATP gamma phosphate is transferred to the NDP beta phosphate via a ping-pong mechanism, using a phosphorylated active-site intermediate (By similarity).</text>
</comment>
<comment type="catalytic activity">
    <reaction>
        <text>a 2'-deoxyribonucleoside 5'-diphosphate + ATP = a 2'-deoxyribonucleoside 5'-triphosphate + ADP</text>
        <dbReference type="Rhea" id="RHEA:44640"/>
        <dbReference type="ChEBI" id="CHEBI:30616"/>
        <dbReference type="ChEBI" id="CHEBI:61560"/>
        <dbReference type="ChEBI" id="CHEBI:73316"/>
        <dbReference type="ChEBI" id="CHEBI:456216"/>
        <dbReference type="EC" id="2.7.4.6"/>
    </reaction>
</comment>
<comment type="catalytic activity">
    <reaction>
        <text>a ribonucleoside 5'-diphosphate + ATP = a ribonucleoside 5'-triphosphate + ADP</text>
        <dbReference type="Rhea" id="RHEA:18113"/>
        <dbReference type="ChEBI" id="CHEBI:30616"/>
        <dbReference type="ChEBI" id="CHEBI:57930"/>
        <dbReference type="ChEBI" id="CHEBI:61557"/>
        <dbReference type="ChEBI" id="CHEBI:456216"/>
        <dbReference type="EC" id="2.7.4.6"/>
    </reaction>
</comment>
<comment type="cofactor">
    <cofactor evidence="1">
        <name>Mg(2+)</name>
        <dbReference type="ChEBI" id="CHEBI:18420"/>
    </cofactor>
</comment>
<comment type="similarity">
    <text evidence="2">Belongs to the NDK family.</text>
</comment>
<sequence>MSDERTFIAIKPDGVQRGLISQILSRFESRGYKLVGIKLVTPTENLLKQHYAEHVEKPFFPKMLAYMTSGPILATVWEGKDVVKQGRVILGATNPLNSAPGTIRGDFALDMGRNVCHGSDSVESAQREIDLWFKKEELVDWKLNQLSWIYE</sequence>
<feature type="chain" id="PRO_0000137147" description="Nucleoside diphosphate kinase">
    <location>
        <begin position="1"/>
        <end position="151"/>
    </location>
</feature>
<feature type="active site" description="Pros-phosphohistidine intermediate" evidence="1">
    <location>
        <position position="117"/>
    </location>
</feature>
<feature type="binding site" evidence="1">
    <location>
        <position position="11"/>
    </location>
    <ligand>
        <name>ATP</name>
        <dbReference type="ChEBI" id="CHEBI:30616"/>
    </ligand>
</feature>
<feature type="binding site" evidence="1">
    <location>
        <position position="59"/>
    </location>
    <ligand>
        <name>ATP</name>
        <dbReference type="ChEBI" id="CHEBI:30616"/>
    </ligand>
</feature>
<feature type="binding site" evidence="1">
    <location>
        <position position="87"/>
    </location>
    <ligand>
        <name>ATP</name>
        <dbReference type="ChEBI" id="CHEBI:30616"/>
    </ligand>
</feature>
<feature type="binding site" evidence="1">
    <location>
        <position position="93"/>
    </location>
    <ligand>
        <name>ATP</name>
        <dbReference type="ChEBI" id="CHEBI:30616"/>
    </ligand>
</feature>
<feature type="binding site" evidence="1">
    <location>
        <position position="104"/>
    </location>
    <ligand>
        <name>ATP</name>
        <dbReference type="ChEBI" id="CHEBI:30616"/>
    </ligand>
</feature>
<feature type="binding site" evidence="1">
    <location>
        <position position="114"/>
    </location>
    <ligand>
        <name>ATP</name>
        <dbReference type="ChEBI" id="CHEBI:30616"/>
    </ligand>
</feature>
<proteinExistence type="inferred from homology"/>
<keyword id="KW-0067">ATP-binding</keyword>
<keyword id="KW-0418">Kinase</keyword>
<keyword id="KW-0460">Magnesium</keyword>
<keyword id="KW-0479">Metal-binding</keyword>
<keyword id="KW-0546">Nucleotide metabolism</keyword>
<keyword id="KW-0547">Nucleotide-binding</keyword>
<keyword id="KW-0597">Phosphoprotein</keyword>
<keyword id="KW-1185">Reference proteome</keyword>
<keyword id="KW-0808">Transferase</keyword>